<accession>A0JZ91</accession>
<keyword id="KW-0488">Methylation</keyword>
<keyword id="KW-1185">Reference proteome</keyword>
<keyword id="KW-0687">Ribonucleoprotein</keyword>
<keyword id="KW-0689">Ribosomal protein</keyword>
<keyword id="KW-0694">RNA-binding</keyword>
<keyword id="KW-0699">rRNA-binding</keyword>
<keyword id="KW-0820">tRNA-binding</keyword>
<comment type="function">
    <text evidence="2">With S4 and S5 plays an important role in translational accuracy.</text>
</comment>
<comment type="function">
    <text evidence="2">Interacts with and stabilizes bases of the 16S rRNA that are involved in tRNA selection in the A site and with the mRNA backbone. Located at the interface of the 30S and 50S subunits, it traverses the body of the 30S subunit contacting proteins on the other side and probably holding the rRNA structure together. The combined cluster of proteins S8, S12 and S17 appears to hold together the shoulder and platform of the 30S subunit.</text>
</comment>
<comment type="subunit">
    <text evidence="2">Part of the 30S ribosomal subunit. Contacts proteins S8 and S17. May interact with IF1 in the 30S initiation complex.</text>
</comment>
<comment type="similarity">
    <text evidence="2">Belongs to the universal ribosomal protein uS12 family.</text>
</comment>
<dbReference type="EMBL" id="CP000454">
    <property type="protein sequence ID" value="ABK04361.1"/>
    <property type="molecule type" value="Genomic_DNA"/>
</dbReference>
<dbReference type="RefSeq" id="WP_011692814.1">
    <property type="nucleotide sequence ID" value="NC_008541.1"/>
</dbReference>
<dbReference type="SMR" id="A0JZ91"/>
<dbReference type="STRING" id="290399.Arth_2982"/>
<dbReference type="KEGG" id="art:Arth_2982"/>
<dbReference type="eggNOG" id="COG0048">
    <property type="taxonomic scope" value="Bacteria"/>
</dbReference>
<dbReference type="HOGENOM" id="CLU_104295_1_2_11"/>
<dbReference type="OrthoDB" id="9802366at2"/>
<dbReference type="Proteomes" id="UP000000754">
    <property type="component" value="Chromosome"/>
</dbReference>
<dbReference type="GO" id="GO:0015935">
    <property type="term" value="C:small ribosomal subunit"/>
    <property type="evidence" value="ECO:0007669"/>
    <property type="project" value="InterPro"/>
</dbReference>
<dbReference type="GO" id="GO:0019843">
    <property type="term" value="F:rRNA binding"/>
    <property type="evidence" value="ECO:0007669"/>
    <property type="project" value="UniProtKB-UniRule"/>
</dbReference>
<dbReference type="GO" id="GO:0003735">
    <property type="term" value="F:structural constituent of ribosome"/>
    <property type="evidence" value="ECO:0007669"/>
    <property type="project" value="InterPro"/>
</dbReference>
<dbReference type="GO" id="GO:0000049">
    <property type="term" value="F:tRNA binding"/>
    <property type="evidence" value="ECO:0007669"/>
    <property type="project" value="UniProtKB-UniRule"/>
</dbReference>
<dbReference type="GO" id="GO:0006412">
    <property type="term" value="P:translation"/>
    <property type="evidence" value="ECO:0007669"/>
    <property type="project" value="UniProtKB-UniRule"/>
</dbReference>
<dbReference type="CDD" id="cd03368">
    <property type="entry name" value="Ribosomal_S12"/>
    <property type="match status" value="1"/>
</dbReference>
<dbReference type="FunFam" id="2.40.50.140:FF:000001">
    <property type="entry name" value="30S ribosomal protein S12"/>
    <property type="match status" value="1"/>
</dbReference>
<dbReference type="Gene3D" id="2.40.50.140">
    <property type="entry name" value="Nucleic acid-binding proteins"/>
    <property type="match status" value="1"/>
</dbReference>
<dbReference type="HAMAP" id="MF_00403_B">
    <property type="entry name" value="Ribosomal_uS12_B"/>
    <property type="match status" value="1"/>
</dbReference>
<dbReference type="InterPro" id="IPR012340">
    <property type="entry name" value="NA-bd_OB-fold"/>
</dbReference>
<dbReference type="InterPro" id="IPR006032">
    <property type="entry name" value="Ribosomal_uS12"/>
</dbReference>
<dbReference type="InterPro" id="IPR005679">
    <property type="entry name" value="Ribosomal_uS12_bac"/>
</dbReference>
<dbReference type="NCBIfam" id="TIGR00981">
    <property type="entry name" value="rpsL_bact"/>
    <property type="match status" value="1"/>
</dbReference>
<dbReference type="PANTHER" id="PTHR11652">
    <property type="entry name" value="30S RIBOSOMAL PROTEIN S12 FAMILY MEMBER"/>
    <property type="match status" value="1"/>
</dbReference>
<dbReference type="Pfam" id="PF00164">
    <property type="entry name" value="Ribosom_S12_S23"/>
    <property type="match status" value="1"/>
</dbReference>
<dbReference type="PIRSF" id="PIRSF002133">
    <property type="entry name" value="Ribosomal_S12/S23"/>
    <property type="match status" value="1"/>
</dbReference>
<dbReference type="PRINTS" id="PR01034">
    <property type="entry name" value="RIBOSOMALS12"/>
</dbReference>
<dbReference type="SUPFAM" id="SSF50249">
    <property type="entry name" value="Nucleic acid-binding proteins"/>
    <property type="match status" value="1"/>
</dbReference>
<dbReference type="PROSITE" id="PS00055">
    <property type="entry name" value="RIBOSOMAL_S12"/>
    <property type="match status" value="1"/>
</dbReference>
<protein>
    <recommendedName>
        <fullName evidence="2">Small ribosomal subunit protein uS12</fullName>
    </recommendedName>
    <alternativeName>
        <fullName evidence="3">30S ribosomal protein S12</fullName>
    </alternativeName>
</protein>
<proteinExistence type="inferred from homology"/>
<evidence type="ECO:0000250" key="1"/>
<evidence type="ECO:0000255" key="2">
    <source>
        <dbReference type="HAMAP-Rule" id="MF_00403"/>
    </source>
</evidence>
<evidence type="ECO:0000305" key="3"/>
<reference key="1">
    <citation type="journal article" date="2013" name="Stand. Genomic Sci.">
        <title>Complete genome sequence of Arthrobacter sp. strain FB24.</title>
        <authorList>
            <person name="Nakatsu C.H."/>
            <person name="Barabote R."/>
            <person name="Thompson S."/>
            <person name="Bruce D."/>
            <person name="Detter C."/>
            <person name="Brettin T."/>
            <person name="Han C."/>
            <person name="Beasley F."/>
            <person name="Chen W."/>
            <person name="Konopka A."/>
            <person name="Xie G."/>
        </authorList>
    </citation>
    <scope>NUCLEOTIDE SEQUENCE [LARGE SCALE GENOMIC DNA]</scope>
    <source>
        <strain>FB24</strain>
    </source>
</reference>
<gene>
    <name evidence="2" type="primary">rpsL</name>
    <name type="ordered locus">Arth_2982</name>
</gene>
<name>RS12_ARTS2</name>
<organism>
    <name type="scientific">Arthrobacter sp. (strain FB24)</name>
    <dbReference type="NCBI Taxonomy" id="290399"/>
    <lineage>
        <taxon>Bacteria</taxon>
        <taxon>Bacillati</taxon>
        <taxon>Actinomycetota</taxon>
        <taxon>Actinomycetes</taxon>
        <taxon>Micrococcales</taxon>
        <taxon>Micrococcaceae</taxon>
        <taxon>Arthrobacter</taxon>
    </lineage>
</organism>
<feature type="chain" id="PRO_0000295952" description="Small ribosomal subunit protein uS12">
    <location>
        <begin position="1"/>
        <end position="124"/>
    </location>
</feature>
<feature type="modified residue" description="3-methylthioaspartic acid" evidence="1">
    <location>
        <position position="89"/>
    </location>
</feature>
<sequence>MPTINQLVRKGRTPKVKKTKAPALNGSPMRRGVCTRVYTTTPKKPNSALRKVARVRLNGGVEVTAYIPGVGHNLQEHSIVLVRGGRVKDLPGVRYKIVRGALDTQGVKNRKQARSRYGAKMEKK</sequence>